<reference key="1">
    <citation type="journal article" date="2007" name="Genome Res.">
        <title>Lateral gene transfer between obligate intracellular bacteria: evidence from the Rickettsia massiliae genome.</title>
        <authorList>
            <person name="Blanc G."/>
            <person name="Ogata H."/>
            <person name="Robert C."/>
            <person name="Audic S."/>
            <person name="Claverie J.-M."/>
            <person name="Raoult D."/>
        </authorList>
    </citation>
    <scope>NUCLEOTIDE SEQUENCE [LARGE SCALE GENOMIC DNA]</scope>
    <source>
        <strain>Mtu5</strain>
    </source>
</reference>
<comment type="function">
    <text evidence="1">Endonuclease that specifically degrades the RNA of RNA-DNA hybrids.</text>
</comment>
<comment type="catalytic activity">
    <reaction evidence="1">
        <text>Endonucleolytic cleavage to 5'-phosphomonoester.</text>
        <dbReference type="EC" id="3.1.26.4"/>
    </reaction>
</comment>
<comment type="cofactor">
    <cofactor evidence="1">
        <name>Mn(2+)</name>
        <dbReference type="ChEBI" id="CHEBI:29035"/>
    </cofactor>
    <cofactor evidence="1">
        <name>Mg(2+)</name>
        <dbReference type="ChEBI" id="CHEBI:18420"/>
    </cofactor>
    <text evidence="1">Manganese or magnesium. Binds 1 divalent metal ion per monomer in the absence of substrate. May bind a second metal ion after substrate binding.</text>
</comment>
<comment type="subcellular location">
    <subcellularLocation>
        <location evidence="1">Cytoplasm</location>
    </subcellularLocation>
</comment>
<comment type="similarity">
    <text evidence="1">Belongs to the RNase HII family.</text>
</comment>
<sequence length="194" mass="21548">MMEVDLLYFEKKYHNCIVAGIDEAGRGPLAGPVVASAVIIDNANIITGIKDSKKLSKKTRELLYEQITSNYVWATAIISHTEIDDINILEATKKACSIAVANLSLEPEIVLVDGNMQFKDERFVSIINGDNLSLSIAAASIVAKVTRDRLMLDLSAELPQYLWHKNSGYGTKEHIEAINIHGLSPYHRRSFRCC</sequence>
<name>RNH2_RICM5</name>
<feature type="chain" id="PRO_0000334947" description="Ribonuclease HII">
    <location>
        <begin position="1"/>
        <end position="194"/>
    </location>
</feature>
<feature type="domain" description="RNase H type-2" evidence="2">
    <location>
        <begin position="16"/>
        <end position="194"/>
    </location>
</feature>
<feature type="binding site" evidence="1">
    <location>
        <position position="22"/>
    </location>
    <ligand>
        <name>a divalent metal cation</name>
        <dbReference type="ChEBI" id="CHEBI:60240"/>
    </ligand>
</feature>
<feature type="binding site" evidence="1">
    <location>
        <position position="23"/>
    </location>
    <ligand>
        <name>a divalent metal cation</name>
        <dbReference type="ChEBI" id="CHEBI:60240"/>
    </ligand>
</feature>
<feature type="binding site" evidence="1">
    <location>
        <position position="113"/>
    </location>
    <ligand>
        <name>a divalent metal cation</name>
        <dbReference type="ChEBI" id="CHEBI:60240"/>
    </ligand>
</feature>
<evidence type="ECO:0000255" key="1">
    <source>
        <dbReference type="HAMAP-Rule" id="MF_00052"/>
    </source>
</evidence>
<evidence type="ECO:0000255" key="2">
    <source>
        <dbReference type="PROSITE-ProRule" id="PRU01319"/>
    </source>
</evidence>
<protein>
    <recommendedName>
        <fullName evidence="1">Ribonuclease HII</fullName>
        <shortName evidence="1">RNase HII</shortName>
        <ecNumber evidence="1">3.1.26.4</ecNumber>
    </recommendedName>
</protein>
<dbReference type="EC" id="3.1.26.4" evidence="1"/>
<dbReference type="EMBL" id="CP000683">
    <property type="protein sequence ID" value="ABV84544.1"/>
    <property type="molecule type" value="Genomic_DNA"/>
</dbReference>
<dbReference type="SMR" id="A8F0V8"/>
<dbReference type="KEGG" id="rms:RMA_0272"/>
<dbReference type="HOGENOM" id="CLU_036532_3_1_5"/>
<dbReference type="Proteomes" id="UP000001311">
    <property type="component" value="Chromosome"/>
</dbReference>
<dbReference type="GO" id="GO:0005737">
    <property type="term" value="C:cytoplasm"/>
    <property type="evidence" value="ECO:0007669"/>
    <property type="project" value="UniProtKB-SubCell"/>
</dbReference>
<dbReference type="GO" id="GO:0032299">
    <property type="term" value="C:ribonuclease H2 complex"/>
    <property type="evidence" value="ECO:0007669"/>
    <property type="project" value="TreeGrafter"/>
</dbReference>
<dbReference type="GO" id="GO:0030145">
    <property type="term" value="F:manganese ion binding"/>
    <property type="evidence" value="ECO:0007669"/>
    <property type="project" value="UniProtKB-UniRule"/>
</dbReference>
<dbReference type="GO" id="GO:0003723">
    <property type="term" value="F:RNA binding"/>
    <property type="evidence" value="ECO:0007669"/>
    <property type="project" value="InterPro"/>
</dbReference>
<dbReference type="GO" id="GO:0004523">
    <property type="term" value="F:RNA-DNA hybrid ribonuclease activity"/>
    <property type="evidence" value="ECO:0007669"/>
    <property type="project" value="UniProtKB-UniRule"/>
</dbReference>
<dbReference type="GO" id="GO:0043137">
    <property type="term" value="P:DNA replication, removal of RNA primer"/>
    <property type="evidence" value="ECO:0007669"/>
    <property type="project" value="TreeGrafter"/>
</dbReference>
<dbReference type="GO" id="GO:0006298">
    <property type="term" value="P:mismatch repair"/>
    <property type="evidence" value="ECO:0007669"/>
    <property type="project" value="TreeGrafter"/>
</dbReference>
<dbReference type="CDD" id="cd07182">
    <property type="entry name" value="RNase_HII_bacteria_HII_like"/>
    <property type="match status" value="1"/>
</dbReference>
<dbReference type="Gene3D" id="3.30.420.10">
    <property type="entry name" value="Ribonuclease H-like superfamily/Ribonuclease H"/>
    <property type="match status" value="1"/>
</dbReference>
<dbReference type="HAMAP" id="MF_00052_B">
    <property type="entry name" value="RNase_HII_B"/>
    <property type="match status" value="1"/>
</dbReference>
<dbReference type="InterPro" id="IPR022898">
    <property type="entry name" value="RNase_HII"/>
</dbReference>
<dbReference type="InterPro" id="IPR001352">
    <property type="entry name" value="RNase_HII/HIII"/>
</dbReference>
<dbReference type="InterPro" id="IPR024567">
    <property type="entry name" value="RNase_HII/HIII_dom"/>
</dbReference>
<dbReference type="InterPro" id="IPR012337">
    <property type="entry name" value="RNaseH-like_sf"/>
</dbReference>
<dbReference type="InterPro" id="IPR036397">
    <property type="entry name" value="RNaseH_sf"/>
</dbReference>
<dbReference type="NCBIfam" id="NF000595">
    <property type="entry name" value="PRK00015.1-3"/>
    <property type="match status" value="1"/>
</dbReference>
<dbReference type="PANTHER" id="PTHR10954">
    <property type="entry name" value="RIBONUCLEASE H2 SUBUNIT A"/>
    <property type="match status" value="1"/>
</dbReference>
<dbReference type="PANTHER" id="PTHR10954:SF18">
    <property type="entry name" value="RIBONUCLEASE HII"/>
    <property type="match status" value="1"/>
</dbReference>
<dbReference type="Pfam" id="PF01351">
    <property type="entry name" value="RNase_HII"/>
    <property type="match status" value="1"/>
</dbReference>
<dbReference type="SUPFAM" id="SSF53098">
    <property type="entry name" value="Ribonuclease H-like"/>
    <property type="match status" value="1"/>
</dbReference>
<dbReference type="PROSITE" id="PS51975">
    <property type="entry name" value="RNASE_H_2"/>
    <property type="match status" value="1"/>
</dbReference>
<gene>
    <name evidence="1" type="primary">rnhB</name>
    <name type="ordered locus">RMA_0272</name>
</gene>
<organism>
    <name type="scientific">Rickettsia massiliae (strain Mtu5)</name>
    <dbReference type="NCBI Taxonomy" id="416276"/>
    <lineage>
        <taxon>Bacteria</taxon>
        <taxon>Pseudomonadati</taxon>
        <taxon>Pseudomonadota</taxon>
        <taxon>Alphaproteobacteria</taxon>
        <taxon>Rickettsiales</taxon>
        <taxon>Rickettsiaceae</taxon>
        <taxon>Rickettsieae</taxon>
        <taxon>Rickettsia</taxon>
        <taxon>spotted fever group</taxon>
    </lineage>
</organism>
<keyword id="KW-0963">Cytoplasm</keyword>
<keyword id="KW-0255">Endonuclease</keyword>
<keyword id="KW-0378">Hydrolase</keyword>
<keyword id="KW-0464">Manganese</keyword>
<keyword id="KW-0479">Metal-binding</keyword>
<keyword id="KW-0540">Nuclease</keyword>
<accession>A8F0V8</accession>
<proteinExistence type="inferred from homology"/>